<gene>
    <name evidence="5" type="primary">MYB60</name>
    <name evidence="6" type="ordered locus">VIT_08s0056g00800</name>
</gene>
<feature type="chain" id="PRO_0000446252" description="Transcription factor MYB60">
    <location>
        <begin position="1"/>
        <end position="321"/>
    </location>
</feature>
<feature type="domain" description="HTH myb-type 1" evidence="2">
    <location>
        <begin position="9"/>
        <end position="65"/>
    </location>
</feature>
<feature type="domain" description="HTH myb-type 2" evidence="2">
    <location>
        <begin position="66"/>
        <end position="116"/>
    </location>
</feature>
<feature type="DNA-binding region" description="H-T-H motif" evidence="2">
    <location>
        <begin position="37"/>
        <end position="61"/>
    </location>
</feature>
<feature type="DNA-binding region" description="H-T-H motif" evidence="2">
    <location>
        <begin position="89"/>
        <end position="112"/>
    </location>
</feature>
<feature type="region of interest" description="Disordered" evidence="3">
    <location>
        <begin position="196"/>
        <end position="215"/>
    </location>
</feature>
<feature type="region of interest" description="Disordered" evidence="3">
    <location>
        <begin position="263"/>
        <end position="291"/>
    </location>
</feature>
<feature type="compositionally biased region" description="Polar residues" evidence="3">
    <location>
        <begin position="206"/>
        <end position="215"/>
    </location>
</feature>
<feature type="compositionally biased region" description="Basic and acidic residues" evidence="3">
    <location>
        <begin position="273"/>
        <end position="290"/>
    </location>
</feature>
<feature type="modified residue" description="S-nitrosocysteine" evidence="1">
    <location>
        <position position="49"/>
    </location>
</feature>
<feature type="modified residue" description="S-nitrosocysteine" evidence="1">
    <location>
        <position position="53"/>
    </location>
</feature>
<dbReference type="EMBL" id="EU816358">
    <property type="protein sequence ID" value="ACF21938.1"/>
    <property type="molecule type" value="mRNA"/>
</dbReference>
<dbReference type="EMBL" id="FN595995">
    <property type="protein sequence ID" value="CCB55976.1"/>
    <property type="molecule type" value="Genomic_DNA"/>
</dbReference>
<dbReference type="EMBL" id="FN597027">
    <property type="status" value="NOT_ANNOTATED_CDS"/>
    <property type="molecule type" value="Genomic_DNA"/>
</dbReference>
<dbReference type="RefSeq" id="NP_001268022.1">
    <property type="nucleotide sequence ID" value="NM_001281093.1"/>
</dbReference>
<dbReference type="SMR" id="B3VTV7"/>
<dbReference type="FunCoup" id="B3VTV7">
    <property type="interactions" value="397"/>
</dbReference>
<dbReference type="STRING" id="29760.B3VTV7"/>
<dbReference type="PaxDb" id="29760-VIT_08s0056g00800.t01"/>
<dbReference type="EnsemblPlants" id="Vitvi08g00069_t001">
    <property type="protein sequence ID" value="Vitvi08g00069_P001"/>
    <property type="gene ID" value="Vitvi08g00069"/>
</dbReference>
<dbReference type="GeneID" id="100233072"/>
<dbReference type="Gramene" id="Vitvi08g00069_t001">
    <property type="protein sequence ID" value="Vitvi08g00069_P001"/>
    <property type="gene ID" value="Vitvi08g00069"/>
</dbReference>
<dbReference type="KEGG" id="vvi:100233072"/>
<dbReference type="eggNOG" id="KOG0048">
    <property type="taxonomic scope" value="Eukaryota"/>
</dbReference>
<dbReference type="HOGENOM" id="CLU_028567_6_0_1"/>
<dbReference type="InParanoid" id="B3VTV7"/>
<dbReference type="OrthoDB" id="2143914at2759"/>
<dbReference type="Proteomes" id="UP000009183">
    <property type="component" value="Chromosome 8"/>
</dbReference>
<dbReference type="GO" id="GO:0005634">
    <property type="term" value="C:nucleus"/>
    <property type="evidence" value="ECO:0007669"/>
    <property type="project" value="UniProtKB-SubCell"/>
</dbReference>
<dbReference type="GO" id="GO:0003677">
    <property type="term" value="F:DNA binding"/>
    <property type="evidence" value="ECO:0007669"/>
    <property type="project" value="UniProtKB-KW"/>
</dbReference>
<dbReference type="GO" id="GO:0009737">
    <property type="term" value="P:response to abscisic acid"/>
    <property type="evidence" value="ECO:0000270"/>
    <property type="project" value="UniProtKB"/>
</dbReference>
<dbReference type="GO" id="GO:0009733">
    <property type="term" value="P:response to auxin"/>
    <property type="evidence" value="ECO:0000318"/>
    <property type="project" value="GO_Central"/>
</dbReference>
<dbReference type="GO" id="GO:0009651">
    <property type="term" value="P:response to salt stress"/>
    <property type="evidence" value="ECO:0000270"/>
    <property type="project" value="UniProtKB"/>
</dbReference>
<dbReference type="GO" id="GO:0010118">
    <property type="term" value="P:stomatal movement"/>
    <property type="evidence" value="ECO:0000315"/>
    <property type="project" value="UniProtKB"/>
</dbReference>
<dbReference type="CDD" id="cd00167">
    <property type="entry name" value="SANT"/>
    <property type="match status" value="2"/>
</dbReference>
<dbReference type="FunFam" id="1.10.10.60:FF:000001">
    <property type="entry name" value="MYB-related transcription factor"/>
    <property type="match status" value="1"/>
</dbReference>
<dbReference type="FunFam" id="1.10.10.60:FF:000368">
    <property type="entry name" value="Transcription factor MYB60"/>
    <property type="match status" value="1"/>
</dbReference>
<dbReference type="Gene3D" id="1.10.10.60">
    <property type="entry name" value="Homeodomain-like"/>
    <property type="match status" value="2"/>
</dbReference>
<dbReference type="InterPro" id="IPR009057">
    <property type="entry name" value="Homeodomain-like_sf"/>
</dbReference>
<dbReference type="InterPro" id="IPR017930">
    <property type="entry name" value="Myb_dom"/>
</dbReference>
<dbReference type="InterPro" id="IPR015495">
    <property type="entry name" value="Myb_TF_plants"/>
</dbReference>
<dbReference type="InterPro" id="IPR001005">
    <property type="entry name" value="SANT/Myb"/>
</dbReference>
<dbReference type="PANTHER" id="PTHR10641">
    <property type="entry name" value="MYB FAMILY TRANSCRIPTION FACTOR"/>
    <property type="match status" value="1"/>
</dbReference>
<dbReference type="PANTHER" id="PTHR10641:SF1152">
    <property type="entry name" value="TRANSCRIPTION FACTOR MYB60"/>
    <property type="match status" value="1"/>
</dbReference>
<dbReference type="Pfam" id="PF00249">
    <property type="entry name" value="Myb_DNA-binding"/>
    <property type="match status" value="2"/>
</dbReference>
<dbReference type="SMART" id="SM00717">
    <property type="entry name" value="SANT"/>
    <property type="match status" value="2"/>
</dbReference>
<dbReference type="SUPFAM" id="SSF46689">
    <property type="entry name" value="Homeodomain-like"/>
    <property type="match status" value="1"/>
</dbReference>
<dbReference type="PROSITE" id="PS51294">
    <property type="entry name" value="HTH_MYB"/>
    <property type="match status" value="2"/>
</dbReference>
<organism>
    <name type="scientific">Vitis vinifera</name>
    <name type="common">Grape</name>
    <dbReference type="NCBI Taxonomy" id="29760"/>
    <lineage>
        <taxon>Eukaryota</taxon>
        <taxon>Viridiplantae</taxon>
        <taxon>Streptophyta</taxon>
        <taxon>Embryophyta</taxon>
        <taxon>Tracheophyta</taxon>
        <taxon>Spermatophyta</taxon>
        <taxon>Magnoliopsida</taxon>
        <taxon>eudicotyledons</taxon>
        <taxon>Gunneridae</taxon>
        <taxon>Pentapetalae</taxon>
        <taxon>rosids</taxon>
        <taxon>Vitales</taxon>
        <taxon>Vitaceae</taxon>
        <taxon>Viteae</taxon>
        <taxon>Vitis</taxon>
    </lineage>
</organism>
<proteinExistence type="evidence at transcript level"/>
<protein>
    <recommendedName>
        <fullName evidence="5">Transcription factor MYB60</fullName>
    </recommendedName>
    <alternativeName>
        <fullName evidence="5">Myb domain protein 60</fullName>
        <shortName evidence="5">VvMYB60</shortName>
    </alternativeName>
</protein>
<accession>B3VTV7</accession>
<sequence length="321" mass="36174">MGRPPCCDKVGIKKGPWTPEEDIILVSYIQEHGPGNWRSVPTNTGLLRCSKSCRLRWTNYLRPGIKRGNFTPHEEGMIIHLQALLGNKWAAIASYLPQRTDNDIKNYWNTHLKKKIKKFQSALSPHMASDSTTSTCTNHQFVPRSYAGDDHHRRGSSFEVINGHSSAHPSLNSPISTYASSTENISRLLEGWMRSSPKATKEKLHQNSSLEEGSIDMTGNSMAVAAVTSVQCYRPKLEQGGGELVANDEFESILEYENLNDDHHQTTDATIPSDDHDHDHEMKMDHDQKKHNPPLSFLEKWLLDESAAQGEEMMDQLSPIF</sequence>
<comment type="function">
    <text evidence="4">Transcription factor involved in the regulation of gene (e.g. drought-regulated and flavonoid biosynthetic genes) expression and stomatal movements leading to negative regulation of responses to drought and responses to other physiological stimuli (e.g. light).</text>
</comment>
<comment type="subcellular location">
    <subcellularLocation>
        <location evidence="2">Nucleus</location>
    </subcellularLocation>
</comment>
<comment type="tissue specificity">
    <text evidence="4">Restricted to stomatal guard cells. Mostly expressed in leaves, cotyledons, hypocotyls, seeds and ripened berry skins.</text>
</comment>
<comment type="developmental stage">
    <text evidence="4">During seed development, gradually down-regulated towards the onset of ripening (veraison). During berry skin development, dramatic decrease to full repression at veraison, followed by a slight increase towards ripening. In flowers, barely detectable in stamens, at the interface of filaments and anthers.</text>
</comment>
<comment type="induction">
    <text evidence="4">Repressed by abscisic acid (ABA) and osmotic stress (salt stress).</text>
</comment>
<name>MYB60_VITVI</name>
<keyword id="KW-0238">DNA-binding</keyword>
<keyword id="KW-0539">Nucleus</keyword>
<keyword id="KW-1185">Reference proteome</keyword>
<keyword id="KW-0677">Repeat</keyword>
<keyword id="KW-0702">S-nitrosylation</keyword>
<keyword id="KW-0804">Transcription</keyword>
<keyword id="KW-0805">Transcription regulation</keyword>
<reference key="1">
    <citation type="journal article" date="2008" name="BMC Plant Biol.">
        <title>Analysis of the grape MYB R2R3 subfamily reveals expanded wine quality-related clades and conserved gene structure organization across Vitis and Arabidopsis genomes.</title>
        <authorList>
            <person name="Matus J.T."/>
            <person name="Aquea F."/>
            <person name="Arce-Johnson P."/>
        </authorList>
    </citation>
    <scope>NUCLEOTIDE SEQUENCE [MRNA]</scope>
    <scope>GENE FAMILY</scope>
    <scope>NOMENCLATURE</scope>
    <source>
        <strain>cv. Pinot noir</strain>
    </source>
</reference>
<reference key="2">
    <citation type="journal article" date="2007" name="Nature">
        <title>The grapevine genome sequence suggests ancestral hexaploidization in major angiosperm phyla.</title>
        <authorList>
            <person name="Jaillon O."/>
            <person name="Aury J.-M."/>
            <person name="Noel B."/>
            <person name="Policriti A."/>
            <person name="Clepet C."/>
            <person name="Casagrande A."/>
            <person name="Choisne N."/>
            <person name="Aubourg S."/>
            <person name="Vitulo N."/>
            <person name="Jubin C."/>
            <person name="Vezzi A."/>
            <person name="Legeai F."/>
            <person name="Hugueney P."/>
            <person name="Dasilva C."/>
            <person name="Horner D."/>
            <person name="Mica E."/>
            <person name="Jublot D."/>
            <person name="Poulain J."/>
            <person name="Bruyere C."/>
            <person name="Billault A."/>
            <person name="Segurens B."/>
            <person name="Gouyvenoux M."/>
            <person name="Ugarte E."/>
            <person name="Cattonaro F."/>
            <person name="Anthouard V."/>
            <person name="Vico V."/>
            <person name="Del Fabbro C."/>
            <person name="Alaux M."/>
            <person name="Di Gaspero G."/>
            <person name="Dumas V."/>
            <person name="Felice N."/>
            <person name="Paillard S."/>
            <person name="Juman I."/>
            <person name="Moroldo M."/>
            <person name="Scalabrin S."/>
            <person name="Canaguier A."/>
            <person name="Le Clainche I."/>
            <person name="Malacrida G."/>
            <person name="Durand E."/>
            <person name="Pesole G."/>
            <person name="Laucou V."/>
            <person name="Chatelet P."/>
            <person name="Merdinoglu D."/>
            <person name="Delledonne M."/>
            <person name="Pezzotti M."/>
            <person name="Lecharny A."/>
            <person name="Scarpelli C."/>
            <person name="Artiguenave F."/>
            <person name="Pe M.E."/>
            <person name="Valle G."/>
            <person name="Morgante M."/>
            <person name="Caboche M."/>
            <person name="Adam-Blondon A.-F."/>
            <person name="Weissenbach J."/>
            <person name="Quetier F."/>
            <person name="Wincker P."/>
        </authorList>
    </citation>
    <scope>NUCLEOTIDE SEQUENCE [LARGE SCALE GENOMIC DNA]</scope>
    <source>
        <strain>cv. Pinot noir / PN40024</strain>
    </source>
</reference>
<reference key="3">
    <citation type="journal article" date="2011" name="BMC Plant Biol.">
        <title>The grapevine guard cell-related VvMYB60 transcription factor is involved in the regulation of stomatal activity and is differentially expressed in response to ABA and osmotic stress.</title>
        <authorList>
            <person name="Galbiati M."/>
            <person name="Matus J.T."/>
            <person name="Francia P."/>
            <person name="Rusconi F."/>
            <person name="Canon P."/>
            <person name="Medina C."/>
            <person name="Conti L."/>
            <person name="Cominelli E."/>
            <person name="Tonelli C."/>
            <person name="Arce-Johnson P."/>
        </authorList>
    </citation>
    <scope>FUNCTION</scope>
    <scope>REPRESSION BY ABSCISIC ACID</scope>
    <scope>INDUCTION BY OSMOTIC STRESS</scope>
    <scope>TISSUE SPECIFICITY</scope>
    <scope>DEVELOPMENTAL STAGE</scope>
    <source>
        <strain>cv. Cabernet Sauvignon</strain>
    </source>
</reference>
<evidence type="ECO:0000250" key="1">
    <source>
        <dbReference type="UniProtKB" id="Q9SCU7"/>
    </source>
</evidence>
<evidence type="ECO:0000255" key="2">
    <source>
        <dbReference type="PROSITE-ProRule" id="PRU00625"/>
    </source>
</evidence>
<evidence type="ECO:0000256" key="3">
    <source>
        <dbReference type="SAM" id="MobiDB-lite"/>
    </source>
</evidence>
<evidence type="ECO:0000269" key="4">
    <source>
    </source>
</evidence>
<evidence type="ECO:0000303" key="5">
    <source>
    </source>
</evidence>
<evidence type="ECO:0000312" key="6">
    <source>
        <dbReference type="EMBL" id="CCB55976.1"/>
    </source>
</evidence>